<feature type="chain" id="PRO_0000281985" description="Putative F-box/LRR-repeat protein At5g41840">
    <location>
        <begin position="1"/>
        <end position="540"/>
    </location>
</feature>
<feature type="domain" description="F-box" evidence="1">
    <location>
        <begin position="13"/>
        <end position="61"/>
    </location>
</feature>
<feature type="repeat" description="LRR 1">
    <location>
        <begin position="80"/>
        <end position="105"/>
    </location>
</feature>
<feature type="repeat" description="LRR 2">
    <location>
        <begin position="137"/>
        <end position="165"/>
    </location>
</feature>
<feature type="repeat" description="LRR 3">
    <location>
        <begin position="189"/>
        <end position="214"/>
    </location>
</feature>
<feature type="repeat" description="LRR 4">
    <location>
        <begin position="217"/>
        <end position="242"/>
    </location>
</feature>
<feature type="repeat" description="LRR 5">
    <location>
        <begin position="254"/>
        <end position="282"/>
    </location>
</feature>
<feature type="repeat" description="LRR 6">
    <location>
        <begin position="329"/>
        <end position="360"/>
    </location>
</feature>
<feature type="repeat" description="LRR 7">
    <location>
        <begin position="361"/>
        <end position="386"/>
    </location>
</feature>
<sequence>MKSRKKVVVGVSGDRISGLPDALICHILSFLPTKEAASTTVLAKRWKPLLAFVPNLNFDDSIYFHPRARRNKYSKSYESFMSFVDSVLALQAKTKTPLKRFHVKCEDVVDQSWVLEWIPKVLKRGVLDIDLHITSSRNYCENSSFYSLPSKIFVSKTLVRLKIQFQDGVHIDVEGGVSLPKLKTLHLDYFKIETSMLNKLLSGCHALEELVLANLMWADSSEDEACHVSVSIPTLKRLNFCRSEDFYEGEFHFYEDYDEENINEGVSLSFDNPNLVYLEYSDVIVDKYKQVSFDSLVEANLRLRKTPDQDETDKVNVTKLLMGIHNVKILYLSDDTLEVLSCCRERIPVFDNLLELTIKTTPYVGWKSLPPLLKSCPSLETLVFEGLHHKYTKRCGDKDGCLCKYENHWGTKKKKNVRTCLSSSLVKVLKILKFGETFEDENEDGLDVDHDDYDDEDAVSCDEVGGVVEEQIEHVKHFLETMPVLKQVILYYNTPKDEDVMKVFKKLEKLPRVASANCNVQISSKNLSLSSTSTKRGTLL</sequence>
<name>FBL88_ARATH</name>
<reference key="1">
    <citation type="journal article" date="1998" name="DNA Res.">
        <title>Structural analysis of Arabidopsis thaliana chromosome 5. VII. Sequence features of the regions of 1,013,767 bp covered by sixteen physically assigned P1 and TAC clones.</title>
        <authorList>
            <person name="Nakamura Y."/>
            <person name="Sato S."/>
            <person name="Asamizu E."/>
            <person name="Kaneko T."/>
            <person name="Kotani H."/>
            <person name="Miyajima N."/>
            <person name="Tabata S."/>
        </authorList>
    </citation>
    <scope>NUCLEOTIDE SEQUENCE [LARGE SCALE GENOMIC DNA]</scope>
    <source>
        <strain>cv. Columbia</strain>
    </source>
</reference>
<reference key="2">
    <citation type="journal article" date="2017" name="Plant J.">
        <title>Araport11: a complete reannotation of the Arabidopsis thaliana reference genome.</title>
        <authorList>
            <person name="Cheng C.Y."/>
            <person name="Krishnakumar V."/>
            <person name="Chan A.P."/>
            <person name="Thibaud-Nissen F."/>
            <person name="Schobel S."/>
            <person name="Town C.D."/>
        </authorList>
    </citation>
    <scope>GENOME REANNOTATION</scope>
    <source>
        <strain>cv. Columbia</strain>
    </source>
</reference>
<accession>Q9FJ30</accession>
<dbReference type="EMBL" id="AB016871">
    <property type="protein sequence ID" value="BAB10659.1"/>
    <property type="molecule type" value="Genomic_DNA"/>
</dbReference>
<dbReference type="EMBL" id="CP002688">
    <property type="protein sequence ID" value="AED94735.1"/>
    <property type="molecule type" value="Genomic_DNA"/>
</dbReference>
<dbReference type="RefSeq" id="NP_198999.1">
    <property type="nucleotide sequence ID" value="NM_123549.1"/>
</dbReference>
<dbReference type="iPTMnet" id="Q9FJ30"/>
<dbReference type="PaxDb" id="3702-AT5G41840.1"/>
<dbReference type="ProteomicsDB" id="230076"/>
<dbReference type="EnsemblPlants" id="AT5G41840.1">
    <property type="protein sequence ID" value="AT5G41840.1"/>
    <property type="gene ID" value="AT5G41840"/>
</dbReference>
<dbReference type="GeneID" id="834189"/>
<dbReference type="Gramene" id="AT5G41840.1">
    <property type="protein sequence ID" value="AT5G41840.1"/>
    <property type="gene ID" value="AT5G41840"/>
</dbReference>
<dbReference type="KEGG" id="ath:AT5G41840"/>
<dbReference type="Araport" id="AT5G41840"/>
<dbReference type="TAIR" id="AT5G41840"/>
<dbReference type="HOGENOM" id="CLU_010721_7_4_1"/>
<dbReference type="InParanoid" id="Q9FJ30"/>
<dbReference type="OMA" id="CEDVVHP"/>
<dbReference type="PhylomeDB" id="Q9FJ30"/>
<dbReference type="PRO" id="PR:Q9FJ30"/>
<dbReference type="Proteomes" id="UP000006548">
    <property type="component" value="Chromosome 5"/>
</dbReference>
<dbReference type="ExpressionAtlas" id="Q9FJ30">
    <property type="expression patterns" value="baseline"/>
</dbReference>
<dbReference type="CDD" id="cd22160">
    <property type="entry name" value="F-box_AtFBL13-like"/>
    <property type="match status" value="1"/>
</dbReference>
<dbReference type="Gene3D" id="3.80.10.10">
    <property type="entry name" value="Ribonuclease Inhibitor"/>
    <property type="match status" value="1"/>
</dbReference>
<dbReference type="InterPro" id="IPR036047">
    <property type="entry name" value="F-box-like_dom_sf"/>
</dbReference>
<dbReference type="InterPro" id="IPR053781">
    <property type="entry name" value="F-box_AtFBL13-like"/>
</dbReference>
<dbReference type="InterPro" id="IPR001810">
    <property type="entry name" value="F-box_dom"/>
</dbReference>
<dbReference type="InterPro" id="IPR006566">
    <property type="entry name" value="FBD"/>
</dbReference>
<dbReference type="InterPro" id="IPR055294">
    <property type="entry name" value="FBL60-like"/>
</dbReference>
<dbReference type="InterPro" id="IPR032675">
    <property type="entry name" value="LRR_dom_sf"/>
</dbReference>
<dbReference type="InterPro" id="IPR055411">
    <property type="entry name" value="LRR_FXL15/At3g58940/PEG3-like"/>
</dbReference>
<dbReference type="PANTHER" id="PTHR31293">
    <property type="entry name" value="RNI-LIKE SUPERFAMILY PROTEIN"/>
    <property type="match status" value="1"/>
</dbReference>
<dbReference type="PANTHER" id="PTHR31293:SF16">
    <property type="entry name" value="RNI-LIKE SUPERFAMILY PROTEIN"/>
    <property type="match status" value="1"/>
</dbReference>
<dbReference type="Pfam" id="PF00646">
    <property type="entry name" value="F-box"/>
    <property type="match status" value="1"/>
</dbReference>
<dbReference type="Pfam" id="PF24758">
    <property type="entry name" value="LRR_At5g56370"/>
    <property type="match status" value="1"/>
</dbReference>
<dbReference type="SMART" id="SM00579">
    <property type="entry name" value="FBD"/>
    <property type="match status" value="1"/>
</dbReference>
<dbReference type="SUPFAM" id="SSF81383">
    <property type="entry name" value="F-box domain"/>
    <property type="match status" value="1"/>
</dbReference>
<dbReference type="SUPFAM" id="SSF52047">
    <property type="entry name" value="RNI-like"/>
    <property type="match status" value="1"/>
</dbReference>
<dbReference type="PROSITE" id="PS00018">
    <property type="entry name" value="EF_HAND_1"/>
    <property type="match status" value="1"/>
</dbReference>
<dbReference type="PROSITE" id="PS50181">
    <property type="entry name" value="FBOX"/>
    <property type="match status" value="1"/>
</dbReference>
<evidence type="ECO:0000255" key="1">
    <source>
        <dbReference type="PROSITE-ProRule" id="PRU00080"/>
    </source>
</evidence>
<proteinExistence type="predicted"/>
<gene>
    <name type="ordered locus">At5g41840</name>
    <name type="ORF">K16L22.13</name>
</gene>
<organism>
    <name type="scientific">Arabidopsis thaliana</name>
    <name type="common">Mouse-ear cress</name>
    <dbReference type="NCBI Taxonomy" id="3702"/>
    <lineage>
        <taxon>Eukaryota</taxon>
        <taxon>Viridiplantae</taxon>
        <taxon>Streptophyta</taxon>
        <taxon>Embryophyta</taxon>
        <taxon>Tracheophyta</taxon>
        <taxon>Spermatophyta</taxon>
        <taxon>Magnoliopsida</taxon>
        <taxon>eudicotyledons</taxon>
        <taxon>Gunneridae</taxon>
        <taxon>Pentapetalae</taxon>
        <taxon>rosids</taxon>
        <taxon>malvids</taxon>
        <taxon>Brassicales</taxon>
        <taxon>Brassicaceae</taxon>
        <taxon>Camelineae</taxon>
        <taxon>Arabidopsis</taxon>
    </lineage>
</organism>
<protein>
    <recommendedName>
        <fullName>Putative F-box/LRR-repeat protein At5g41840</fullName>
    </recommendedName>
</protein>
<keyword id="KW-0433">Leucine-rich repeat</keyword>
<keyword id="KW-1185">Reference proteome</keyword>
<keyword id="KW-0677">Repeat</keyword>